<name>IPYR_CHLT2</name>
<gene>
    <name evidence="1" type="primary">ppa</name>
    <name type="ordered locus">CTL0141</name>
</gene>
<evidence type="ECO:0000255" key="1">
    <source>
        <dbReference type="HAMAP-Rule" id="MF_00209"/>
    </source>
</evidence>
<reference key="1">
    <citation type="journal article" date="2008" name="Genome Res.">
        <title>Chlamydia trachomatis: genome sequence analysis of lymphogranuloma venereum isolates.</title>
        <authorList>
            <person name="Thomson N.R."/>
            <person name="Holden M.T.G."/>
            <person name="Carder C."/>
            <person name="Lennard N."/>
            <person name="Lockey S.J."/>
            <person name="Marsh P."/>
            <person name="Skipp P."/>
            <person name="O'Connor C.D."/>
            <person name="Goodhead I."/>
            <person name="Norbertzcak H."/>
            <person name="Harris B."/>
            <person name="Ormond D."/>
            <person name="Rance R."/>
            <person name="Quail M.A."/>
            <person name="Parkhill J."/>
            <person name="Stephens R.S."/>
            <person name="Clarke I.N."/>
        </authorList>
    </citation>
    <scope>NUCLEOTIDE SEQUENCE [LARGE SCALE GENOMIC DNA]</scope>
    <source>
        <strain>ATCC VR-902B / DSM 19102 / 434/Bu</strain>
    </source>
</reference>
<accession>B0B8Z8</accession>
<sequence length="209" mass="23391">MSKTPLSIAHPWHGPVLTRDDYESLCCYIEITPADSVKFELDKETGILKVDRPQKFSNFCPCLYGLLPKTYCGDLSGEYSGQQSNRENIKGDGDPLDICVLTEKNITQGNILLQARPIGGIRILDSEEADDKIIAVLEDDLVYGNIEDISECPGTVLDMIQHYFLTYKATPESLIQAKPAKIEIVGLYGKKEAQKVIRLAHEDYCNLFM</sequence>
<feature type="chain" id="PRO_1000099656" description="Inorganic pyrophosphatase">
    <location>
        <begin position="1"/>
        <end position="209"/>
    </location>
</feature>
<feature type="binding site" evidence="1">
    <location>
        <position position="38"/>
    </location>
    <ligand>
        <name>substrate</name>
    </ligand>
</feature>
<feature type="binding site" evidence="1">
    <location>
        <position position="52"/>
    </location>
    <ligand>
        <name>substrate</name>
    </ligand>
</feature>
<feature type="binding site" evidence="1">
    <location>
        <position position="64"/>
    </location>
    <ligand>
        <name>substrate</name>
    </ligand>
</feature>
<feature type="binding site" evidence="1">
    <location>
        <position position="92"/>
    </location>
    <ligand>
        <name>Mg(2+)</name>
        <dbReference type="ChEBI" id="CHEBI:18420"/>
        <label>1</label>
    </ligand>
</feature>
<feature type="binding site" evidence="1">
    <location>
        <position position="97"/>
    </location>
    <ligand>
        <name>Mg(2+)</name>
        <dbReference type="ChEBI" id="CHEBI:18420"/>
        <label>1</label>
    </ligand>
</feature>
<feature type="binding site" evidence="1">
    <location>
        <position position="97"/>
    </location>
    <ligand>
        <name>Mg(2+)</name>
        <dbReference type="ChEBI" id="CHEBI:18420"/>
        <label>2</label>
    </ligand>
</feature>
<feature type="binding site" evidence="1">
    <location>
        <position position="130"/>
    </location>
    <ligand>
        <name>Mg(2+)</name>
        <dbReference type="ChEBI" id="CHEBI:18420"/>
        <label>1</label>
    </ligand>
</feature>
<feature type="binding site" evidence="1">
    <location>
        <position position="167"/>
    </location>
    <ligand>
        <name>substrate</name>
    </ligand>
</feature>
<keyword id="KW-0963">Cytoplasm</keyword>
<keyword id="KW-0378">Hydrolase</keyword>
<keyword id="KW-0460">Magnesium</keyword>
<keyword id="KW-0479">Metal-binding</keyword>
<protein>
    <recommendedName>
        <fullName evidence="1">Inorganic pyrophosphatase</fullName>
        <ecNumber evidence="1">3.6.1.1</ecNumber>
    </recommendedName>
    <alternativeName>
        <fullName evidence="1">Pyrophosphate phospho-hydrolase</fullName>
        <shortName evidence="1">PPase</shortName>
    </alternativeName>
</protein>
<organism>
    <name type="scientific">Chlamydia trachomatis serovar L2 (strain ATCC VR-902B / DSM 19102 / 434/Bu)</name>
    <dbReference type="NCBI Taxonomy" id="471472"/>
    <lineage>
        <taxon>Bacteria</taxon>
        <taxon>Pseudomonadati</taxon>
        <taxon>Chlamydiota</taxon>
        <taxon>Chlamydiia</taxon>
        <taxon>Chlamydiales</taxon>
        <taxon>Chlamydiaceae</taxon>
        <taxon>Chlamydia/Chlamydophila group</taxon>
        <taxon>Chlamydia</taxon>
    </lineage>
</organism>
<dbReference type="EC" id="3.6.1.1" evidence="1"/>
<dbReference type="EMBL" id="AM884176">
    <property type="protein sequence ID" value="CAP03585.1"/>
    <property type="molecule type" value="Genomic_DNA"/>
</dbReference>
<dbReference type="RefSeq" id="WP_009872152.1">
    <property type="nucleotide sequence ID" value="NC_010287.1"/>
</dbReference>
<dbReference type="RefSeq" id="YP_001654232.1">
    <property type="nucleotide sequence ID" value="NC_010287.1"/>
</dbReference>
<dbReference type="SMR" id="B0B8Z8"/>
<dbReference type="KEGG" id="ctb:CTL0141"/>
<dbReference type="PATRIC" id="fig|471472.4.peg.152"/>
<dbReference type="HOGENOM" id="CLU_073198_2_1_0"/>
<dbReference type="Proteomes" id="UP001154402">
    <property type="component" value="Chromosome"/>
</dbReference>
<dbReference type="GO" id="GO:0005737">
    <property type="term" value="C:cytoplasm"/>
    <property type="evidence" value="ECO:0007669"/>
    <property type="project" value="UniProtKB-SubCell"/>
</dbReference>
<dbReference type="GO" id="GO:0004427">
    <property type="term" value="F:inorganic diphosphate phosphatase activity"/>
    <property type="evidence" value="ECO:0007669"/>
    <property type="project" value="UniProtKB-UniRule"/>
</dbReference>
<dbReference type="GO" id="GO:0000287">
    <property type="term" value="F:magnesium ion binding"/>
    <property type="evidence" value="ECO:0007669"/>
    <property type="project" value="UniProtKB-UniRule"/>
</dbReference>
<dbReference type="GO" id="GO:0006796">
    <property type="term" value="P:phosphate-containing compound metabolic process"/>
    <property type="evidence" value="ECO:0007669"/>
    <property type="project" value="InterPro"/>
</dbReference>
<dbReference type="CDD" id="cd00412">
    <property type="entry name" value="pyrophosphatase"/>
    <property type="match status" value="1"/>
</dbReference>
<dbReference type="FunFam" id="3.90.80.10:FF:000016">
    <property type="entry name" value="Inorganic pyrophosphatase"/>
    <property type="match status" value="1"/>
</dbReference>
<dbReference type="Gene3D" id="3.90.80.10">
    <property type="entry name" value="Inorganic pyrophosphatase"/>
    <property type="match status" value="1"/>
</dbReference>
<dbReference type="HAMAP" id="MF_00209">
    <property type="entry name" value="Inorganic_PPase"/>
    <property type="match status" value="1"/>
</dbReference>
<dbReference type="InterPro" id="IPR008162">
    <property type="entry name" value="Pyrophosphatase"/>
</dbReference>
<dbReference type="InterPro" id="IPR036649">
    <property type="entry name" value="Pyrophosphatase_sf"/>
</dbReference>
<dbReference type="NCBIfam" id="NF001886">
    <property type="entry name" value="PRK00642.1"/>
    <property type="match status" value="1"/>
</dbReference>
<dbReference type="PANTHER" id="PTHR10286">
    <property type="entry name" value="INORGANIC PYROPHOSPHATASE"/>
    <property type="match status" value="1"/>
</dbReference>
<dbReference type="Pfam" id="PF00719">
    <property type="entry name" value="Pyrophosphatase"/>
    <property type="match status" value="1"/>
</dbReference>
<dbReference type="SUPFAM" id="SSF50324">
    <property type="entry name" value="Inorganic pyrophosphatase"/>
    <property type="match status" value="1"/>
</dbReference>
<dbReference type="PROSITE" id="PS00387">
    <property type="entry name" value="PPASE"/>
    <property type="match status" value="1"/>
</dbReference>
<proteinExistence type="inferred from homology"/>
<comment type="function">
    <text evidence="1">Catalyzes the hydrolysis of inorganic pyrophosphate (PPi) forming two phosphate ions.</text>
</comment>
<comment type="catalytic activity">
    <reaction evidence="1">
        <text>diphosphate + H2O = 2 phosphate + H(+)</text>
        <dbReference type="Rhea" id="RHEA:24576"/>
        <dbReference type="ChEBI" id="CHEBI:15377"/>
        <dbReference type="ChEBI" id="CHEBI:15378"/>
        <dbReference type="ChEBI" id="CHEBI:33019"/>
        <dbReference type="ChEBI" id="CHEBI:43474"/>
        <dbReference type="EC" id="3.6.1.1"/>
    </reaction>
</comment>
<comment type="cofactor">
    <cofactor evidence="1">
        <name>Mg(2+)</name>
        <dbReference type="ChEBI" id="CHEBI:18420"/>
    </cofactor>
</comment>
<comment type="subunit">
    <text evidence="1">Homohexamer.</text>
</comment>
<comment type="subcellular location">
    <subcellularLocation>
        <location evidence="1">Cytoplasm</location>
    </subcellularLocation>
</comment>
<comment type="similarity">
    <text evidence="1">Belongs to the PPase family.</text>
</comment>